<name>WWOX_DROME</name>
<reference key="1">
    <citation type="journal article" date="2000" name="Science">
        <title>The genome sequence of Drosophila melanogaster.</title>
        <authorList>
            <person name="Adams M.D."/>
            <person name="Celniker S.E."/>
            <person name="Holt R.A."/>
            <person name="Evans C.A."/>
            <person name="Gocayne J.D."/>
            <person name="Amanatides P.G."/>
            <person name="Scherer S.E."/>
            <person name="Li P.W."/>
            <person name="Hoskins R.A."/>
            <person name="Galle R.F."/>
            <person name="George R.A."/>
            <person name="Lewis S.E."/>
            <person name="Richards S."/>
            <person name="Ashburner M."/>
            <person name="Henderson S.N."/>
            <person name="Sutton G.G."/>
            <person name="Wortman J.R."/>
            <person name="Yandell M.D."/>
            <person name="Zhang Q."/>
            <person name="Chen L.X."/>
            <person name="Brandon R.C."/>
            <person name="Rogers Y.-H.C."/>
            <person name="Blazej R.G."/>
            <person name="Champe M."/>
            <person name="Pfeiffer B.D."/>
            <person name="Wan K.H."/>
            <person name="Doyle C."/>
            <person name="Baxter E.G."/>
            <person name="Helt G."/>
            <person name="Nelson C.R."/>
            <person name="Miklos G.L.G."/>
            <person name="Abril J.F."/>
            <person name="Agbayani A."/>
            <person name="An H.-J."/>
            <person name="Andrews-Pfannkoch C."/>
            <person name="Baldwin D."/>
            <person name="Ballew R.M."/>
            <person name="Basu A."/>
            <person name="Baxendale J."/>
            <person name="Bayraktaroglu L."/>
            <person name="Beasley E.M."/>
            <person name="Beeson K.Y."/>
            <person name="Benos P.V."/>
            <person name="Berman B.P."/>
            <person name="Bhandari D."/>
            <person name="Bolshakov S."/>
            <person name="Borkova D."/>
            <person name="Botchan M.R."/>
            <person name="Bouck J."/>
            <person name="Brokstein P."/>
            <person name="Brottier P."/>
            <person name="Burtis K.C."/>
            <person name="Busam D.A."/>
            <person name="Butler H."/>
            <person name="Cadieu E."/>
            <person name="Center A."/>
            <person name="Chandra I."/>
            <person name="Cherry J.M."/>
            <person name="Cawley S."/>
            <person name="Dahlke C."/>
            <person name="Davenport L.B."/>
            <person name="Davies P."/>
            <person name="de Pablos B."/>
            <person name="Delcher A."/>
            <person name="Deng Z."/>
            <person name="Mays A.D."/>
            <person name="Dew I."/>
            <person name="Dietz S.M."/>
            <person name="Dodson K."/>
            <person name="Doup L.E."/>
            <person name="Downes M."/>
            <person name="Dugan-Rocha S."/>
            <person name="Dunkov B.C."/>
            <person name="Dunn P."/>
            <person name="Durbin K.J."/>
            <person name="Evangelista C.C."/>
            <person name="Ferraz C."/>
            <person name="Ferriera S."/>
            <person name="Fleischmann W."/>
            <person name="Fosler C."/>
            <person name="Gabrielian A.E."/>
            <person name="Garg N.S."/>
            <person name="Gelbart W.M."/>
            <person name="Glasser K."/>
            <person name="Glodek A."/>
            <person name="Gong F."/>
            <person name="Gorrell J.H."/>
            <person name="Gu Z."/>
            <person name="Guan P."/>
            <person name="Harris M."/>
            <person name="Harris N.L."/>
            <person name="Harvey D.A."/>
            <person name="Heiman T.J."/>
            <person name="Hernandez J.R."/>
            <person name="Houck J."/>
            <person name="Hostin D."/>
            <person name="Houston K.A."/>
            <person name="Howland T.J."/>
            <person name="Wei M.-H."/>
            <person name="Ibegwam C."/>
            <person name="Jalali M."/>
            <person name="Kalush F."/>
            <person name="Karpen G.H."/>
            <person name="Ke Z."/>
            <person name="Kennison J.A."/>
            <person name="Ketchum K.A."/>
            <person name="Kimmel B.E."/>
            <person name="Kodira C.D."/>
            <person name="Kraft C.L."/>
            <person name="Kravitz S."/>
            <person name="Kulp D."/>
            <person name="Lai Z."/>
            <person name="Lasko P."/>
            <person name="Lei Y."/>
            <person name="Levitsky A.A."/>
            <person name="Li J.H."/>
            <person name="Li Z."/>
            <person name="Liang Y."/>
            <person name="Lin X."/>
            <person name="Liu X."/>
            <person name="Mattei B."/>
            <person name="McIntosh T.C."/>
            <person name="McLeod M.P."/>
            <person name="McPherson D."/>
            <person name="Merkulov G."/>
            <person name="Milshina N.V."/>
            <person name="Mobarry C."/>
            <person name="Morris J."/>
            <person name="Moshrefi A."/>
            <person name="Mount S.M."/>
            <person name="Moy M."/>
            <person name="Murphy B."/>
            <person name="Murphy L."/>
            <person name="Muzny D.M."/>
            <person name="Nelson D.L."/>
            <person name="Nelson D.R."/>
            <person name="Nelson K.A."/>
            <person name="Nixon K."/>
            <person name="Nusskern D.R."/>
            <person name="Pacleb J.M."/>
            <person name="Palazzolo M."/>
            <person name="Pittman G.S."/>
            <person name="Pan S."/>
            <person name="Pollard J."/>
            <person name="Puri V."/>
            <person name="Reese M.G."/>
            <person name="Reinert K."/>
            <person name="Remington K."/>
            <person name="Saunders R.D.C."/>
            <person name="Scheeler F."/>
            <person name="Shen H."/>
            <person name="Shue B.C."/>
            <person name="Siden-Kiamos I."/>
            <person name="Simpson M."/>
            <person name="Skupski M.P."/>
            <person name="Smith T.J."/>
            <person name="Spier E."/>
            <person name="Spradling A.C."/>
            <person name="Stapleton M."/>
            <person name="Strong R."/>
            <person name="Sun E."/>
            <person name="Svirskas R."/>
            <person name="Tector C."/>
            <person name="Turner R."/>
            <person name="Venter E."/>
            <person name="Wang A.H."/>
            <person name="Wang X."/>
            <person name="Wang Z.-Y."/>
            <person name="Wassarman D.A."/>
            <person name="Weinstock G.M."/>
            <person name="Weissenbach J."/>
            <person name="Williams S.M."/>
            <person name="Woodage T."/>
            <person name="Worley K.C."/>
            <person name="Wu D."/>
            <person name="Yang S."/>
            <person name="Yao Q.A."/>
            <person name="Ye J."/>
            <person name="Yeh R.-F."/>
            <person name="Zaveri J.S."/>
            <person name="Zhan M."/>
            <person name="Zhang G."/>
            <person name="Zhao Q."/>
            <person name="Zheng L."/>
            <person name="Zheng X.H."/>
            <person name="Zhong F.N."/>
            <person name="Zhong W."/>
            <person name="Zhou X."/>
            <person name="Zhu S.C."/>
            <person name="Zhu X."/>
            <person name="Smith H.O."/>
            <person name="Gibbs R.A."/>
            <person name="Myers E.W."/>
            <person name="Rubin G.M."/>
            <person name="Venter J.C."/>
        </authorList>
    </citation>
    <scope>NUCLEOTIDE SEQUENCE [LARGE SCALE GENOMIC DNA]</scope>
    <source>
        <strain>Berkeley</strain>
    </source>
</reference>
<reference key="2">
    <citation type="journal article" date="2002" name="Genome Biol.">
        <title>Annotation of the Drosophila melanogaster euchromatic genome: a systematic review.</title>
        <authorList>
            <person name="Misra S."/>
            <person name="Crosby M.A."/>
            <person name="Mungall C.J."/>
            <person name="Matthews B.B."/>
            <person name="Campbell K.S."/>
            <person name="Hradecky P."/>
            <person name="Huang Y."/>
            <person name="Kaminker J.S."/>
            <person name="Millburn G.H."/>
            <person name="Prochnik S.E."/>
            <person name="Smith C.D."/>
            <person name="Tupy J.L."/>
            <person name="Whitfield E.J."/>
            <person name="Bayraktaroglu L."/>
            <person name="Berman B.P."/>
            <person name="Bettencourt B.R."/>
            <person name="Celniker S.E."/>
            <person name="de Grey A.D.N.J."/>
            <person name="Drysdale R.A."/>
            <person name="Harris N.L."/>
            <person name="Richter J."/>
            <person name="Russo S."/>
            <person name="Schroeder A.J."/>
            <person name="Shu S.Q."/>
            <person name="Stapleton M."/>
            <person name="Yamada C."/>
            <person name="Ashburner M."/>
            <person name="Gelbart W.M."/>
            <person name="Rubin G.M."/>
            <person name="Lewis S.E."/>
        </authorList>
    </citation>
    <scope>GENOME REANNOTATION</scope>
    <source>
        <strain>Berkeley</strain>
    </source>
</reference>
<reference key="3">
    <citation type="journal article" date="2002" name="Genome Biol.">
        <title>A Drosophila full-length cDNA resource.</title>
        <authorList>
            <person name="Stapleton M."/>
            <person name="Carlson J.W."/>
            <person name="Brokstein P."/>
            <person name="Yu C."/>
            <person name="Champe M."/>
            <person name="George R.A."/>
            <person name="Guarin H."/>
            <person name="Kronmiller B."/>
            <person name="Pacleb J.M."/>
            <person name="Park S."/>
            <person name="Wan K.H."/>
            <person name="Rubin G.M."/>
            <person name="Celniker S.E."/>
        </authorList>
    </citation>
    <scope>NUCLEOTIDE SEQUENCE [LARGE SCALE MRNA]</scope>
    <source>
        <strain>Berkeley</strain>
        <tissue>Embryo</tissue>
    </source>
</reference>
<reference key="4">
    <citation type="journal article" date="2005" name="Oncogene">
        <title>FRA16D common chromosomal fragile site oxido-reductase (FOR/WWOX) protects against the effects of ionizing radiation in Drosophila.</title>
        <authorList>
            <person name="O'Keefe L.V."/>
            <person name="Liu Y."/>
            <person name="Perkins A."/>
            <person name="Dayan S."/>
            <person name="Saint R."/>
            <person name="Richards R.I."/>
        </authorList>
    </citation>
    <scope>FUNCTION</scope>
    <scope>SUBCELLULAR LOCATION</scope>
</reference>
<feature type="chain" id="PRO_0000054820" description="WW domain-containing oxidoreductase">
    <location>
        <begin position="1"/>
        <end position="409"/>
    </location>
</feature>
<feature type="domain" description="WW 1" evidence="3">
    <location>
        <begin position="11"/>
        <end position="44"/>
    </location>
</feature>
<feature type="domain" description="WW 2" evidence="3">
    <location>
        <begin position="52"/>
        <end position="86"/>
    </location>
</feature>
<feature type="region of interest" description="Disordered" evidence="4">
    <location>
        <begin position="1"/>
        <end position="23"/>
    </location>
</feature>
<feature type="active site" description="Proton acceptor" evidence="1">
    <location>
        <position position="288"/>
    </location>
</feature>
<feature type="binding site" evidence="1">
    <location>
        <begin position="128"/>
        <end position="134"/>
    </location>
    <ligand>
        <name>NADP(+)</name>
        <dbReference type="ChEBI" id="CHEBI:58349"/>
    </ligand>
</feature>
<feature type="binding site" evidence="1">
    <location>
        <position position="257"/>
    </location>
    <ligand>
        <name>substrate</name>
    </ligand>
</feature>
<gene>
    <name type="primary">Wwox</name>
    <name type="ORF">CG7221</name>
</gene>
<proteinExistence type="evidence at transcript level"/>
<organism>
    <name type="scientific">Drosophila melanogaster</name>
    <name type="common">Fruit fly</name>
    <dbReference type="NCBI Taxonomy" id="7227"/>
    <lineage>
        <taxon>Eukaryota</taxon>
        <taxon>Metazoa</taxon>
        <taxon>Ecdysozoa</taxon>
        <taxon>Arthropoda</taxon>
        <taxon>Hexapoda</taxon>
        <taxon>Insecta</taxon>
        <taxon>Pterygota</taxon>
        <taxon>Neoptera</taxon>
        <taxon>Endopterygota</taxon>
        <taxon>Diptera</taxon>
        <taxon>Brachycera</taxon>
        <taxon>Muscomorpha</taxon>
        <taxon>Ephydroidea</taxon>
        <taxon>Drosophilidae</taxon>
        <taxon>Drosophila</taxon>
        <taxon>Sophophora</taxon>
    </lineage>
</organism>
<sequence>MIALPDTDSEDELPPGWEERATDDGTVCYVNQQGKTSQWTHPRTGRSKRITGELPLGWEKYYDEQGKRFMFLNKETQQRTNVDPRLAFAVEEPTQNVAQVRQRFDSCSTALQVLHGKDLHGRTALITGANCGIGYETARSLAHHGCEIIFACRNRSSAEAAIERIAQERPAARSRCRFAALDLSSLRSVQRFVEEIKQSVSHIDYLILNAGVFALPYTRTVDGLETTFQVSHLSHFYLTLQLETLFDYKTRIIVLSSESHRFANLPVENLAVHHLSPPPEKYWSMMAYNNAKLCNVLFAQELAQRWKQRGISVFSLHPGNMVSSDLSRNYWFYRLLFAIVRPFTKSLQQAAATSIYCATANELTGLSGLYFNNCFFCEPSKLSKSAALQQQLWKLSENLIAELVEQEQH</sequence>
<protein>
    <recommendedName>
        <fullName>WW domain-containing oxidoreductase</fullName>
        <ecNumber>1.1.1.-</ecNumber>
    </recommendedName>
</protein>
<keyword id="KW-0053">Apoptosis</keyword>
<keyword id="KW-0963">Cytoplasm</keyword>
<keyword id="KW-0333">Golgi apparatus</keyword>
<keyword id="KW-0458">Lysosome</keyword>
<keyword id="KW-0496">Mitochondrion</keyword>
<keyword id="KW-0521">NADP</keyword>
<keyword id="KW-0560">Oxidoreductase</keyword>
<keyword id="KW-0597">Phosphoprotein</keyword>
<keyword id="KW-1185">Reference proteome</keyword>
<keyword id="KW-0677">Repeat</keyword>
<keyword id="KW-0879">Wnt signaling pathway</keyword>
<evidence type="ECO:0000250" key="1"/>
<evidence type="ECO:0000250" key="2">
    <source>
        <dbReference type="UniProtKB" id="Q9NZC7"/>
    </source>
</evidence>
<evidence type="ECO:0000255" key="3">
    <source>
        <dbReference type="PROSITE-ProRule" id="PRU00224"/>
    </source>
</evidence>
<evidence type="ECO:0000256" key="4">
    <source>
        <dbReference type="SAM" id="MobiDB-lite"/>
    </source>
</evidence>
<evidence type="ECO:0000269" key="5">
    <source>
    </source>
</evidence>
<evidence type="ECO:0000305" key="6"/>
<comment type="function">
    <text evidence="1 5">Putative oxidoreductase. May control genotoxic stress-induced cell death. May play a role in TGFB1 signaling and TGFB1-mediated cell death. May also play a role in tumor necrosis factor (TNF)-mediated cell death. May play a role in Wnt signaling (By similarity).</text>
</comment>
<comment type="subcellular location">
    <subcellularLocation>
        <location evidence="5">Cytoplasm</location>
    </subcellularLocation>
    <subcellularLocation>
        <location evidence="2">Mitochondrion</location>
    </subcellularLocation>
    <subcellularLocation>
        <location evidence="2">Golgi apparatus</location>
    </subcellularLocation>
    <subcellularLocation>
        <location evidence="2">Lysosome</location>
    </subcellularLocation>
</comment>
<comment type="similarity">
    <text evidence="6">Belongs to the short-chain dehydrogenases/reductases (SDR) family.</text>
</comment>
<accession>Q9VLU5</accession>
<dbReference type="EC" id="1.1.1.-"/>
<dbReference type="EMBL" id="AE014134">
    <property type="protein sequence ID" value="AAF52587.1"/>
    <property type="molecule type" value="Genomic_DNA"/>
</dbReference>
<dbReference type="EMBL" id="AY119574">
    <property type="protein sequence ID" value="AAM50228.1"/>
    <property type="molecule type" value="mRNA"/>
</dbReference>
<dbReference type="RefSeq" id="NP_001285735.1">
    <property type="nucleotide sequence ID" value="NM_001298806.1"/>
</dbReference>
<dbReference type="RefSeq" id="NP_609171.1">
    <property type="nucleotide sequence ID" value="NM_135327.4"/>
</dbReference>
<dbReference type="SMR" id="Q9VLU5"/>
<dbReference type="BioGRID" id="60224">
    <property type="interactions" value="24"/>
</dbReference>
<dbReference type="FunCoup" id="Q9VLU5">
    <property type="interactions" value="296"/>
</dbReference>
<dbReference type="IntAct" id="Q9VLU5">
    <property type="interactions" value="14"/>
</dbReference>
<dbReference type="STRING" id="7227.FBpp0079172"/>
<dbReference type="PaxDb" id="7227-FBpp0079172"/>
<dbReference type="DNASU" id="34090"/>
<dbReference type="EnsemblMetazoa" id="FBtr0079550">
    <property type="protein sequence ID" value="FBpp0079172"/>
    <property type="gene ID" value="FBgn0031972"/>
</dbReference>
<dbReference type="EnsemblMetazoa" id="FBtr0343384">
    <property type="protein sequence ID" value="FBpp0310039"/>
    <property type="gene ID" value="FBgn0031972"/>
</dbReference>
<dbReference type="GeneID" id="34090"/>
<dbReference type="KEGG" id="dme:Dmel_CG7221"/>
<dbReference type="UCSC" id="CG7221-RA">
    <property type="organism name" value="d. melanogaster"/>
</dbReference>
<dbReference type="AGR" id="FB:FBgn0031972"/>
<dbReference type="CTD" id="51741"/>
<dbReference type="FlyBase" id="FBgn0031972">
    <property type="gene designation" value="Wwox"/>
</dbReference>
<dbReference type="VEuPathDB" id="VectorBase:FBgn0031972"/>
<dbReference type="eggNOG" id="KOG1208">
    <property type="taxonomic scope" value="Eukaryota"/>
</dbReference>
<dbReference type="HOGENOM" id="CLU_010194_44_0_1"/>
<dbReference type="InParanoid" id="Q9VLU5"/>
<dbReference type="OMA" id="PPAEKYW"/>
<dbReference type="OrthoDB" id="9989144at2759"/>
<dbReference type="PhylomeDB" id="Q9VLU5"/>
<dbReference type="Reactome" id="R-DME-1251985">
    <property type="pathway name" value="Nuclear signaling by ERBB4"/>
</dbReference>
<dbReference type="Reactome" id="R-DME-8866904">
    <property type="pathway name" value="Negative regulation of activity of TFAP2 (AP-2) family transcription factors"/>
</dbReference>
<dbReference type="Reactome" id="R-DME-8866907">
    <property type="pathway name" value="Activation of the TFAP2 (AP-2) family of transcription factors"/>
</dbReference>
<dbReference type="BioGRID-ORCS" id="34090">
    <property type="hits" value="1 hit in 1 CRISPR screen"/>
</dbReference>
<dbReference type="ChiTaRS" id="Wwox">
    <property type="organism name" value="fly"/>
</dbReference>
<dbReference type="GenomeRNAi" id="34090"/>
<dbReference type="PRO" id="PR:Q9VLU5"/>
<dbReference type="Proteomes" id="UP000000803">
    <property type="component" value="Chromosome 2L"/>
</dbReference>
<dbReference type="Bgee" id="FBgn0031972">
    <property type="expression patterns" value="Expressed in ensheathing neuropil associated glial cell (Drosophila) in brain and 89 other cell types or tissues"/>
</dbReference>
<dbReference type="ExpressionAtlas" id="Q9VLU5">
    <property type="expression patterns" value="baseline and differential"/>
</dbReference>
<dbReference type="GO" id="GO:0005737">
    <property type="term" value="C:cytoplasm"/>
    <property type="evidence" value="ECO:0000314"/>
    <property type="project" value="UniProtKB"/>
</dbReference>
<dbReference type="GO" id="GO:0005794">
    <property type="term" value="C:Golgi apparatus"/>
    <property type="evidence" value="ECO:0007669"/>
    <property type="project" value="UniProtKB-SubCell"/>
</dbReference>
<dbReference type="GO" id="GO:0005764">
    <property type="term" value="C:lysosome"/>
    <property type="evidence" value="ECO:0007669"/>
    <property type="project" value="UniProtKB-SubCell"/>
</dbReference>
<dbReference type="GO" id="GO:0005739">
    <property type="term" value="C:mitochondrion"/>
    <property type="evidence" value="ECO:0007669"/>
    <property type="project" value="UniProtKB-SubCell"/>
</dbReference>
<dbReference type="GO" id="GO:0016491">
    <property type="term" value="F:oxidoreductase activity"/>
    <property type="evidence" value="ECO:0007669"/>
    <property type="project" value="UniProtKB-KW"/>
</dbReference>
<dbReference type="GO" id="GO:0006915">
    <property type="term" value="P:apoptotic process"/>
    <property type="evidence" value="ECO:0007669"/>
    <property type="project" value="UniProtKB-KW"/>
</dbReference>
<dbReference type="GO" id="GO:0050829">
    <property type="term" value="P:defense response to Gram-negative bacterium"/>
    <property type="evidence" value="ECO:0000315"/>
    <property type="project" value="FlyBase"/>
</dbReference>
<dbReference type="GO" id="GO:2000377">
    <property type="term" value="P:regulation of reactive oxygen species metabolic process"/>
    <property type="evidence" value="ECO:0000315"/>
    <property type="project" value="FlyBase"/>
</dbReference>
<dbReference type="GO" id="GO:0010212">
    <property type="term" value="P:response to ionizing radiation"/>
    <property type="evidence" value="ECO:0000315"/>
    <property type="project" value="UniProtKB"/>
</dbReference>
<dbReference type="GO" id="GO:0016055">
    <property type="term" value="P:Wnt signaling pathway"/>
    <property type="evidence" value="ECO:0007669"/>
    <property type="project" value="UniProtKB-KW"/>
</dbReference>
<dbReference type="CDD" id="cd09809">
    <property type="entry name" value="human_WWOX_like_SDR_c-like"/>
    <property type="match status" value="1"/>
</dbReference>
<dbReference type="CDD" id="cd00201">
    <property type="entry name" value="WW"/>
    <property type="match status" value="1"/>
</dbReference>
<dbReference type="FunFam" id="2.20.70.10:FF:000032">
    <property type="entry name" value="WW domain containing oxidoreductase"/>
    <property type="match status" value="1"/>
</dbReference>
<dbReference type="FunFam" id="2.20.70.10:FF:000131">
    <property type="entry name" value="WW domain-containing oxidoreductase"/>
    <property type="match status" value="1"/>
</dbReference>
<dbReference type="FunFam" id="3.40.50.720:FF:000353">
    <property type="entry name" value="WW domain-containing oxidoreductase"/>
    <property type="match status" value="1"/>
</dbReference>
<dbReference type="Gene3D" id="2.20.70.10">
    <property type="match status" value="2"/>
</dbReference>
<dbReference type="Gene3D" id="3.40.50.720">
    <property type="entry name" value="NAD(P)-binding Rossmann-like Domain"/>
    <property type="match status" value="1"/>
</dbReference>
<dbReference type="InterPro" id="IPR036291">
    <property type="entry name" value="NAD(P)-bd_dom_sf"/>
</dbReference>
<dbReference type="InterPro" id="IPR002347">
    <property type="entry name" value="SDR_fam"/>
</dbReference>
<dbReference type="InterPro" id="IPR001202">
    <property type="entry name" value="WW_dom"/>
</dbReference>
<dbReference type="InterPro" id="IPR036020">
    <property type="entry name" value="WW_dom_sf"/>
</dbReference>
<dbReference type="InterPro" id="IPR042732">
    <property type="entry name" value="WWOX_SDR_c-like"/>
</dbReference>
<dbReference type="PANTHER" id="PTHR43157:SF31">
    <property type="entry name" value="PHOSPHATIDYLINOSITOL-GLYCAN BIOSYNTHESIS CLASS F PROTEIN"/>
    <property type="match status" value="1"/>
</dbReference>
<dbReference type="PANTHER" id="PTHR43157">
    <property type="entry name" value="PHOSPHATIDYLINOSITOL-GLYCAN BIOSYNTHESIS CLASS F PROTEIN-RELATED"/>
    <property type="match status" value="1"/>
</dbReference>
<dbReference type="Pfam" id="PF00106">
    <property type="entry name" value="adh_short"/>
    <property type="match status" value="1"/>
</dbReference>
<dbReference type="Pfam" id="PF00397">
    <property type="entry name" value="WW"/>
    <property type="match status" value="1"/>
</dbReference>
<dbReference type="PRINTS" id="PR00081">
    <property type="entry name" value="GDHRDH"/>
</dbReference>
<dbReference type="SMART" id="SM00822">
    <property type="entry name" value="PKS_KR"/>
    <property type="match status" value="1"/>
</dbReference>
<dbReference type="SMART" id="SM00456">
    <property type="entry name" value="WW"/>
    <property type="match status" value="2"/>
</dbReference>
<dbReference type="SUPFAM" id="SSF51735">
    <property type="entry name" value="NAD(P)-binding Rossmann-fold domains"/>
    <property type="match status" value="1"/>
</dbReference>
<dbReference type="SUPFAM" id="SSF51045">
    <property type="entry name" value="WW domain"/>
    <property type="match status" value="2"/>
</dbReference>
<dbReference type="PROSITE" id="PS50020">
    <property type="entry name" value="WW_DOMAIN_2"/>
    <property type="match status" value="2"/>
</dbReference>